<protein>
    <recommendedName>
        <fullName>Uncharacterized protein MJ0554</fullName>
    </recommendedName>
</protein>
<keyword id="KW-1003">Cell membrane</keyword>
<keyword id="KW-0472">Membrane</keyword>
<keyword id="KW-1185">Reference proteome</keyword>
<keyword id="KW-0812">Transmembrane</keyword>
<keyword id="KW-1133">Transmembrane helix</keyword>
<proteinExistence type="predicted"/>
<evidence type="ECO:0000255" key="1"/>
<evidence type="ECO:0000305" key="2"/>
<gene>
    <name type="ordered locus">MJ0554</name>
</gene>
<accession>Q57974</accession>
<dbReference type="EMBL" id="L77117">
    <property type="protein sequence ID" value="AAB98545.1"/>
    <property type="molecule type" value="Genomic_DNA"/>
</dbReference>
<dbReference type="PIR" id="B64369">
    <property type="entry name" value="B64369"/>
</dbReference>
<dbReference type="RefSeq" id="WP_010870058.1">
    <property type="nucleotide sequence ID" value="NC_000909.1"/>
</dbReference>
<dbReference type="SMR" id="Q57974"/>
<dbReference type="PaxDb" id="243232-MJ_0554"/>
<dbReference type="DNASU" id="1451419"/>
<dbReference type="EnsemblBacteria" id="AAB98545">
    <property type="protein sequence ID" value="AAB98545"/>
    <property type="gene ID" value="MJ_0554"/>
</dbReference>
<dbReference type="GeneID" id="1451419"/>
<dbReference type="KEGG" id="mja:MJ_0554"/>
<dbReference type="HOGENOM" id="CLU_1718222_0_0_2"/>
<dbReference type="InParanoid" id="Q57974"/>
<dbReference type="PhylomeDB" id="Q57974"/>
<dbReference type="Proteomes" id="UP000000805">
    <property type="component" value="Chromosome"/>
</dbReference>
<dbReference type="GO" id="GO:0005886">
    <property type="term" value="C:plasma membrane"/>
    <property type="evidence" value="ECO:0007669"/>
    <property type="project" value="UniProtKB-SubCell"/>
</dbReference>
<dbReference type="InterPro" id="IPR035582">
    <property type="entry name" value="DUF5418"/>
</dbReference>
<dbReference type="Pfam" id="PF17439">
    <property type="entry name" value="DUF5418"/>
    <property type="match status" value="1"/>
</dbReference>
<sequence length="152" mass="17434">MVNEHKAHASFMFKIINVFVSFGFNLILGILIYDIFFNIDENLVVACILIAMPIIAFLILILTGGVHKELTYLQIYDKYKLMCEFIREITISTITSELATIATMILYQLQNPIKTITFLLLLIAFLAFGLIFTKLLIDAYFITLKKLKSLKE</sequence>
<comment type="subcellular location">
    <subcellularLocation>
        <location evidence="2">Cell membrane</location>
        <topology evidence="2">Multi-pass membrane protein</topology>
    </subcellularLocation>
</comment>
<comment type="similarity">
    <text evidence="2">To M.jannaschii MJ0129 and MJ0587.</text>
</comment>
<name>Y554_METJA</name>
<reference key="1">
    <citation type="journal article" date="1996" name="Science">
        <title>Complete genome sequence of the methanogenic archaeon, Methanococcus jannaschii.</title>
        <authorList>
            <person name="Bult C.J."/>
            <person name="White O."/>
            <person name="Olsen G.J."/>
            <person name="Zhou L."/>
            <person name="Fleischmann R.D."/>
            <person name="Sutton G.G."/>
            <person name="Blake J.A."/>
            <person name="FitzGerald L.M."/>
            <person name="Clayton R.A."/>
            <person name="Gocayne J.D."/>
            <person name="Kerlavage A.R."/>
            <person name="Dougherty B.A."/>
            <person name="Tomb J.-F."/>
            <person name="Adams M.D."/>
            <person name="Reich C.I."/>
            <person name="Overbeek R."/>
            <person name="Kirkness E.F."/>
            <person name="Weinstock K.G."/>
            <person name="Merrick J.M."/>
            <person name="Glodek A."/>
            <person name="Scott J.L."/>
            <person name="Geoghagen N.S.M."/>
            <person name="Weidman J.F."/>
            <person name="Fuhrmann J.L."/>
            <person name="Nguyen D."/>
            <person name="Utterback T.R."/>
            <person name="Kelley J.M."/>
            <person name="Peterson J.D."/>
            <person name="Sadow P.W."/>
            <person name="Hanna M.C."/>
            <person name="Cotton M.D."/>
            <person name="Roberts K.M."/>
            <person name="Hurst M.A."/>
            <person name="Kaine B.P."/>
            <person name="Borodovsky M."/>
            <person name="Klenk H.-P."/>
            <person name="Fraser C.M."/>
            <person name="Smith H.O."/>
            <person name="Woese C.R."/>
            <person name="Venter J.C."/>
        </authorList>
    </citation>
    <scope>NUCLEOTIDE SEQUENCE [LARGE SCALE GENOMIC DNA]</scope>
    <source>
        <strain>ATCC 43067 / DSM 2661 / JAL-1 / JCM 10045 / NBRC 100440</strain>
    </source>
</reference>
<organism>
    <name type="scientific">Methanocaldococcus jannaschii (strain ATCC 43067 / DSM 2661 / JAL-1 / JCM 10045 / NBRC 100440)</name>
    <name type="common">Methanococcus jannaschii</name>
    <dbReference type="NCBI Taxonomy" id="243232"/>
    <lineage>
        <taxon>Archaea</taxon>
        <taxon>Methanobacteriati</taxon>
        <taxon>Methanobacteriota</taxon>
        <taxon>Methanomada group</taxon>
        <taxon>Methanococci</taxon>
        <taxon>Methanococcales</taxon>
        <taxon>Methanocaldococcaceae</taxon>
        <taxon>Methanocaldococcus</taxon>
    </lineage>
</organism>
<feature type="chain" id="PRO_0000106928" description="Uncharacterized protein MJ0554">
    <location>
        <begin position="1"/>
        <end position="152"/>
    </location>
</feature>
<feature type="transmembrane region" description="Helical" evidence="1">
    <location>
        <begin position="15"/>
        <end position="35"/>
    </location>
</feature>
<feature type="transmembrane region" description="Helical" evidence="1">
    <location>
        <begin position="43"/>
        <end position="63"/>
    </location>
</feature>
<feature type="transmembrane region" description="Helical" evidence="1">
    <location>
        <begin position="117"/>
        <end position="137"/>
    </location>
</feature>